<dbReference type="EMBL" id="Z18946">
    <property type="protein sequence ID" value="CAA79428.1"/>
    <property type="molecule type" value="Genomic_DNA"/>
</dbReference>
<dbReference type="PIR" id="S30997">
    <property type="entry name" value="S30997"/>
</dbReference>
<dbReference type="RefSeq" id="NP_039716.1">
    <property type="nucleotide sequence ID" value="NC_001335.1"/>
</dbReference>
<dbReference type="GeneID" id="2942968"/>
<dbReference type="KEGG" id="vg:2942968"/>
<dbReference type="OrthoDB" id="24282at10239"/>
<dbReference type="Proteomes" id="UP000002123">
    <property type="component" value="Genome"/>
</dbReference>
<dbReference type="InterPro" id="IPR035344">
    <property type="entry name" value="Gp52"/>
</dbReference>
<dbReference type="Pfam" id="PF17468">
    <property type="entry name" value="GP52"/>
    <property type="match status" value="1"/>
</dbReference>
<name>VG52_BPML5</name>
<proteinExistence type="predicted"/>
<protein>
    <recommendedName>
        <fullName>Gene 52 protein</fullName>
    </recommendedName>
    <alternativeName>
        <fullName>Gp52</fullName>
    </alternativeName>
</protein>
<gene>
    <name type="primary">52</name>
</gene>
<sequence length="61" mass="7001">MHNILDPTFNGMPGSELYRAEVFPELFPHQPPMRLENWSQEDLELYVGGCFTPGYGERKSA</sequence>
<accession>Q05268</accession>
<organism>
    <name type="scientific">Mycobacterium phage L5</name>
    <name type="common">Mycobacteriophage L5</name>
    <dbReference type="NCBI Taxonomy" id="31757"/>
    <lineage>
        <taxon>Viruses</taxon>
        <taxon>Duplodnaviria</taxon>
        <taxon>Heunggongvirae</taxon>
        <taxon>Uroviricota</taxon>
        <taxon>Caudoviricetes</taxon>
        <taxon>Fromanvirus</taxon>
    </lineage>
</organism>
<organismHost>
    <name type="scientific">Mycobacterium</name>
    <dbReference type="NCBI Taxonomy" id="1763"/>
</organismHost>
<keyword id="KW-1185">Reference proteome</keyword>
<reference key="1">
    <citation type="journal article" date="1993" name="Mol. Microbiol.">
        <title>DNA sequence, structure and gene expression of mycobacteriophage L5: a phage system for mycobacterial genetics.</title>
        <authorList>
            <person name="Hatfull G.F."/>
            <person name="Sarkis G.J."/>
        </authorList>
    </citation>
    <scope>NUCLEOTIDE SEQUENCE [LARGE SCALE GENOMIC DNA]</scope>
</reference>
<feature type="chain" id="PRO_0000164779" description="Gene 52 protein">
    <location>
        <begin position="1"/>
        <end position="61"/>
    </location>
</feature>